<reference key="1">
    <citation type="journal article" date="2003" name="Nature">
        <title>Unique physiological and pathogenic features of Leptospira interrogans revealed by whole-genome sequencing.</title>
        <authorList>
            <person name="Ren S.-X."/>
            <person name="Fu G."/>
            <person name="Jiang X.-G."/>
            <person name="Zeng R."/>
            <person name="Miao Y.-G."/>
            <person name="Xu H."/>
            <person name="Zhang Y.-X."/>
            <person name="Xiong H."/>
            <person name="Lu G."/>
            <person name="Lu L.-F."/>
            <person name="Jiang H.-Q."/>
            <person name="Jia J."/>
            <person name="Tu Y.-F."/>
            <person name="Jiang J.-X."/>
            <person name="Gu W.-Y."/>
            <person name="Zhang Y.-Q."/>
            <person name="Cai Z."/>
            <person name="Sheng H.-H."/>
            <person name="Yin H.-F."/>
            <person name="Zhang Y."/>
            <person name="Zhu G.-F."/>
            <person name="Wan M."/>
            <person name="Huang H.-L."/>
            <person name="Qian Z."/>
            <person name="Wang S.-Y."/>
            <person name="Ma W."/>
            <person name="Yao Z.-J."/>
            <person name="Shen Y."/>
            <person name="Qiang B.-Q."/>
            <person name="Xia Q.-C."/>
            <person name="Guo X.-K."/>
            <person name="Danchin A."/>
            <person name="Saint Girons I."/>
            <person name="Somerville R.L."/>
            <person name="Wen Y.-M."/>
            <person name="Shi M.-H."/>
            <person name="Chen Z."/>
            <person name="Xu J.-G."/>
            <person name="Zhao G.-P."/>
        </authorList>
    </citation>
    <scope>NUCLEOTIDE SEQUENCE [LARGE SCALE GENOMIC DNA]</scope>
    <source>
        <strain>56601</strain>
    </source>
</reference>
<name>FTSK_LEPIN</name>
<organism>
    <name type="scientific">Leptospira interrogans serogroup Icterohaemorrhagiae serovar Lai (strain 56601)</name>
    <dbReference type="NCBI Taxonomy" id="189518"/>
    <lineage>
        <taxon>Bacteria</taxon>
        <taxon>Pseudomonadati</taxon>
        <taxon>Spirochaetota</taxon>
        <taxon>Spirochaetia</taxon>
        <taxon>Leptospirales</taxon>
        <taxon>Leptospiraceae</taxon>
        <taxon>Leptospira</taxon>
    </lineage>
</organism>
<dbReference type="EMBL" id="AE010300">
    <property type="protein sequence ID" value="AAN50209.1"/>
    <property type="molecule type" value="Genomic_DNA"/>
</dbReference>
<dbReference type="RefSeq" id="NP_713191.1">
    <property type="nucleotide sequence ID" value="NC_004342.2"/>
</dbReference>
<dbReference type="RefSeq" id="WP_000444199.1">
    <property type="nucleotide sequence ID" value="NC_004342.2"/>
</dbReference>
<dbReference type="SMR" id="Q8F1W7"/>
<dbReference type="STRING" id="189518.LA_3011"/>
<dbReference type="PaxDb" id="189518-LA_3011"/>
<dbReference type="EnsemblBacteria" id="AAN50209">
    <property type="protein sequence ID" value="AAN50209"/>
    <property type="gene ID" value="LA_3011"/>
</dbReference>
<dbReference type="KEGG" id="lil:LA_3011"/>
<dbReference type="PATRIC" id="fig|189518.3.peg.2989"/>
<dbReference type="HOGENOM" id="CLU_001981_9_7_12"/>
<dbReference type="InParanoid" id="Q8F1W7"/>
<dbReference type="OrthoDB" id="9807790at2"/>
<dbReference type="Proteomes" id="UP000001408">
    <property type="component" value="Chromosome I"/>
</dbReference>
<dbReference type="GO" id="GO:0005886">
    <property type="term" value="C:plasma membrane"/>
    <property type="evidence" value="ECO:0007669"/>
    <property type="project" value="UniProtKB-SubCell"/>
</dbReference>
<dbReference type="GO" id="GO:0005524">
    <property type="term" value="F:ATP binding"/>
    <property type="evidence" value="ECO:0007669"/>
    <property type="project" value="UniProtKB-KW"/>
</dbReference>
<dbReference type="GO" id="GO:0016887">
    <property type="term" value="F:ATP hydrolysis activity"/>
    <property type="evidence" value="ECO:0007669"/>
    <property type="project" value="InterPro"/>
</dbReference>
<dbReference type="GO" id="GO:0003677">
    <property type="term" value="F:DNA binding"/>
    <property type="evidence" value="ECO:0007669"/>
    <property type="project" value="UniProtKB-KW"/>
</dbReference>
<dbReference type="GO" id="GO:0015616">
    <property type="term" value="F:DNA translocase activity"/>
    <property type="evidence" value="ECO:0000318"/>
    <property type="project" value="GO_Central"/>
</dbReference>
<dbReference type="GO" id="GO:0051301">
    <property type="term" value="P:cell division"/>
    <property type="evidence" value="ECO:0007669"/>
    <property type="project" value="UniProtKB-KW"/>
</dbReference>
<dbReference type="GO" id="GO:0007059">
    <property type="term" value="P:chromosome segregation"/>
    <property type="evidence" value="ECO:0007669"/>
    <property type="project" value="UniProtKB-KW"/>
</dbReference>
<dbReference type="CDD" id="cd01127">
    <property type="entry name" value="TrwB_TraG_TraD_VirD4"/>
    <property type="match status" value="1"/>
</dbReference>
<dbReference type="Gene3D" id="3.30.980.40">
    <property type="match status" value="1"/>
</dbReference>
<dbReference type="Gene3D" id="3.40.50.300">
    <property type="entry name" value="P-loop containing nucleotide triphosphate hydrolases"/>
    <property type="match status" value="1"/>
</dbReference>
<dbReference type="Gene3D" id="1.10.10.10">
    <property type="entry name" value="Winged helix-like DNA-binding domain superfamily/Winged helix DNA-binding domain"/>
    <property type="match status" value="1"/>
</dbReference>
<dbReference type="InterPro" id="IPR003593">
    <property type="entry name" value="AAA+_ATPase"/>
</dbReference>
<dbReference type="InterPro" id="IPR050206">
    <property type="entry name" value="FtsK/SpoIIIE/SftA"/>
</dbReference>
<dbReference type="InterPro" id="IPR025199">
    <property type="entry name" value="FtsK_4TM"/>
</dbReference>
<dbReference type="InterPro" id="IPR041027">
    <property type="entry name" value="FtsK_alpha"/>
</dbReference>
<dbReference type="InterPro" id="IPR002543">
    <property type="entry name" value="FtsK_dom"/>
</dbReference>
<dbReference type="InterPro" id="IPR018541">
    <property type="entry name" value="Ftsk_gamma"/>
</dbReference>
<dbReference type="InterPro" id="IPR027417">
    <property type="entry name" value="P-loop_NTPase"/>
</dbReference>
<dbReference type="InterPro" id="IPR036388">
    <property type="entry name" value="WH-like_DNA-bd_sf"/>
</dbReference>
<dbReference type="InterPro" id="IPR036390">
    <property type="entry name" value="WH_DNA-bd_sf"/>
</dbReference>
<dbReference type="PANTHER" id="PTHR22683:SF41">
    <property type="entry name" value="DNA TRANSLOCASE FTSK"/>
    <property type="match status" value="1"/>
</dbReference>
<dbReference type="PANTHER" id="PTHR22683">
    <property type="entry name" value="SPORULATION PROTEIN RELATED"/>
    <property type="match status" value="1"/>
</dbReference>
<dbReference type="Pfam" id="PF13491">
    <property type="entry name" value="FtsK_4TM"/>
    <property type="match status" value="1"/>
</dbReference>
<dbReference type="Pfam" id="PF17854">
    <property type="entry name" value="FtsK_alpha"/>
    <property type="match status" value="1"/>
</dbReference>
<dbReference type="Pfam" id="PF09397">
    <property type="entry name" value="FtsK_gamma"/>
    <property type="match status" value="1"/>
</dbReference>
<dbReference type="Pfam" id="PF01580">
    <property type="entry name" value="FtsK_SpoIIIE"/>
    <property type="match status" value="1"/>
</dbReference>
<dbReference type="SMART" id="SM00382">
    <property type="entry name" value="AAA"/>
    <property type="match status" value="1"/>
</dbReference>
<dbReference type="SMART" id="SM00843">
    <property type="entry name" value="Ftsk_gamma"/>
    <property type="match status" value="1"/>
</dbReference>
<dbReference type="SUPFAM" id="SSF52540">
    <property type="entry name" value="P-loop containing nucleoside triphosphate hydrolases"/>
    <property type="match status" value="1"/>
</dbReference>
<dbReference type="SUPFAM" id="SSF46785">
    <property type="entry name" value="Winged helix' DNA-binding domain"/>
    <property type="match status" value="1"/>
</dbReference>
<dbReference type="PROSITE" id="PS50901">
    <property type="entry name" value="FTSK"/>
    <property type="match status" value="1"/>
</dbReference>
<feature type="chain" id="PRO_0000098267" description="DNA translocase FtsK">
    <location>
        <begin position="1"/>
        <end position="948"/>
    </location>
</feature>
<feature type="transmembrane region" description="Helical" evidence="2">
    <location>
        <begin position="19"/>
        <end position="39"/>
    </location>
</feature>
<feature type="transmembrane region" description="Helical" evidence="2">
    <location>
        <begin position="61"/>
        <end position="81"/>
    </location>
</feature>
<feature type="transmembrane region" description="Helical" evidence="2">
    <location>
        <begin position="96"/>
        <end position="116"/>
    </location>
</feature>
<feature type="transmembrane region" description="Helical" evidence="2">
    <location>
        <begin position="138"/>
        <end position="158"/>
    </location>
</feature>
<feature type="topological domain" description="Cytoplasmic" evidence="2">
    <location>
        <begin position="159"/>
        <end position="948"/>
    </location>
</feature>
<feature type="domain" description="FtsK" evidence="3">
    <location>
        <begin position="622"/>
        <end position="816"/>
    </location>
</feature>
<feature type="region of interest" description="Disordered" evidence="4">
    <location>
        <begin position="389"/>
        <end position="458"/>
    </location>
</feature>
<feature type="compositionally biased region" description="Acidic residues" evidence="4">
    <location>
        <begin position="400"/>
        <end position="419"/>
    </location>
</feature>
<feature type="compositionally biased region" description="Polar residues" evidence="4">
    <location>
        <begin position="432"/>
        <end position="451"/>
    </location>
</feature>
<feature type="binding site" evidence="3">
    <location>
        <begin position="642"/>
        <end position="647"/>
    </location>
    <ligand>
        <name>ATP</name>
        <dbReference type="ChEBI" id="CHEBI:30616"/>
    </ligand>
</feature>
<comment type="function">
    <text evidence="1">Essential cell division protein that coordinates cell division and chromosome segregation. The N-terminus is involved in assembly of the cell-division machinery. The C-terminus functions as a DNA motor that moves dsDNA in an ATP-dependent manner towards the dif recombination site, which is located within the replication terminus region. Required for activation of the Xer recombinase, allowing activation of chromosome unlinking by recombination (By similarity).</text>
</comment>
<comment type="subunit">
    <text evidence="1">Homohexamer. Forms a ring that surrounds DNA (By similarity).</text>
</comment>
<comment type="subcellular location">
    <subcellularLocation>
        <location evidence="1">Cell inner membrane</location>
        <topology evidence="1">Multi-pass membrane protein</topology>
    </subcellularLocation>
    <text evidence="1">Located at the septum.</text>
</comment>
<comment type="domain">
    <text evidence="1">Consists of an N-terminal domain, which is sufficient for the localization to the septal ring and is required for cell division, followed by a linker domain, and a C-terminal domain, which forms the translocation motor involved in chromosome segregation. The C-terminal domain can be further subdivided into alpha, beta and gamma subdomains. The alpha and beta subdomains form the DNA pump, and the gamma subdomain is a regulatory subdomain (By similarity).</text>
</comment>
<comment type="similarity">
    <text evidence="5">Belongs to the FtsK/SpoIIIE/SftA family.</text>
</comment>
<evidence type="ECO:0000250" key="1"/>
<evidence type="ECO:0000255" key="2"/>
<evidence type="ECO:0000255" key="3">
    <source>
        <dbReference type="PROSITE-ProRule" id="PRU00289"/>
    </source>
</evidence>
<evidence type="ECO:0000256" key="4">
    <source>
        <dbReference type="SAM" id="MobiDB-lite"/>
    </source>
</evidence>
<evidence type="ECO:0000305" key="5"/>
<protein>
    <recommendedName>
        <fullName>DNA translocase FtsK</fullName>
    </recommendedName>
</protein>
<proteinExistence type="inferred from homology"/>
<keyword id="KW-0067">ATP-binding</keyword>
<keyword id="KW-0131">Cell cycle</keyword>
<keyword id="KW-0132">Cell division</keyword>
<keyword id="KW-0997">Cell inner membrane</keyword>
<keyword id="KW-1003">Cell membrane</keyword>
<keyword id="KW-0159">Chromosome partition</keyword>
<keyword id="KW-0238">DNA-binding</keyword>
<keyword id="KW-0472">Membrane</keyword>
<keyword id="KW-0547">Nucleotide-binding</keyword>
<keyword id="KW-1185">Reference proteome</keyword>
<keyword id="KW-0812">Transmembrane</keyword>
<keyword id="KW-1133">Transmembrane helix</keyword>
<gene>
    <name type="primary">ftsK</name>
    <name type="ordered locus">LA_3011</name>
</gene>
<accession>Q8F1W7</accession>
<sequence length="948" mass="106585">MESKPKEFKPTWNLQNGKMILPYVLLFAGIILTLSLGSFDAGERGVEYNFFGRLGYYISYGMFFMFGAASFLPGLFTIGLGSLRLVKEEFELTNRLFSIPVFLLCYTVTLQVTGHVSTIPFASQGGFVGQLLSSGLEFVFGSTGKILIHLVFYFYGLILLLNESPLHFIGRILGTAGAKYKEGFKSGFGKRGESLGSLFQSAVEKFQKKESVPPWISTNTNEKNSLNQSYSLSNPHTHSYERNLGNKQPSELQNTLHSTFGKEGKLSDFLSKVDTGPTVTSKNSRIRFQNHGAFSGNFEEQGKVFRFESVSSSLSEKIREEKNFQKTPSRWEILDFRTSSFSNIISEKEPSVTLVVPSESEIKKEWNQTNPILQSEEIPDKFLFEEKEKVEQTDSGLENECYEEESVDSEENLSEEETLSSETSTEKDISENFKTSTISNSKEVSPNHTSNSSIHSLEKSEEKLELGLPFPPTTLVPEVKSKRSIYHVPLKSLKTTTTKIQDPLFKIEADKVARKIEEIIRQYGYESQVVSMERGPIITRYELTPPLGVKLGRITSLSDELRLYLAVKNIRIVAPIPGKSTIGIEVPNSIREDVFLGDILHQNLSLRPKKDLSILIGKDISGKLVGIDLNKLPHLLVAGTTGSGKSVCLNSMISSLVVHLSPEEVRFIMIDPKMVELTLYEDIPHLLMPVITDPKKATRALAWAIQEMEARYHSVSKLKCRDFKTYNEKVEQGAHRDGYKKMPYIVIFIDELADLMMVSGKDLEDAITRITQKSRAVGIHLIMATQRPSVDVITGLIKANCPARMAFHVAQKTDSKIILDQNGAESLLGKGDFLYKSPTAADLIRIQSPYVSEEEIEKIVEEARKFGKPSYVDFNLDEETESSVVDEGDEELFEQAWEIVRTDRKASASYLQRRMRIGYNKAARLMELMEERGYVSPQIGSKGREILK</sequence>